<protein>
    <recommendedName>
        <fullName>Thioredoxin 2</fullName>
        <shortName>Trx-2</shortName>
        <ecNumber>1.8.1.8</ecNumber>
    </recommendedName>
    <alternativeName>
        <fullName>Protein-disulfide reductase</fullName>
    </alternativeName>
</protein>
<name>THIO2_ECOLI</name>
<dbReference type="EC" id="1.8.1.8"/>
<dbReference type="EMBL" id="U85942">
    <property type="protein sequence ID" value="AAB88587.1"/>
    <property type="molecule type" value="Genomic_DNA"/>
</dbReference>
<dbReference type="EMBL" id="U00096">
    <property type="protein sequence ID" value="AAC75635.1"/>
    <property type="molecule type" value="Genomic_DNA"/>
</dbReference>
<dbReference type="EMBL" id="AP009048">
    <property type="protein sequence ID" value="BAA16469.2"/>
    <property type="molecule type" value="Genomic_DNA"/>
</dbReference>
<dbReference type="EMBL" id="D13169">
    <property type="status" value="NOT_ANNOTATED_CDS"/>
    <property type="molecule type" value="Genomic_DNA"/>
</dbReference>
<dbReference type="PIR" id="E65036">
    <property type="entry name" value="E65036"/>
</dbReference>
<dbReference type="RefSeq" id="NP_417077.1">
    <property type="nucleotide sequence ID" value="NC_000913.3"/>
</dbReference>
<dbReference type="RefSeq" id="WP_001098726.1">
    <property type="nucleotide sequence ID" value="NZ_STEB01000011.1"/>
</dbReference>
<dbReference type="SMR" id="P0AGG4"/>
<dbReference type="BioGRID" id="4263420">
    <property type="interactions" value="38"/>
</dbReference>
<dbReference type="BioGRID" id="851399">
    <property type="interactions" value="2"/>
</dbReference>
<dbReference type="DIP" id="DIP-48115N"/>
<dbReference type="FunCoup" id="P0AGG4">
    <property type="interactions" value="609"/>
</dbReference>
<dbReference type="IntAct" id="P0AGG4">
    <property type="interactions" value="26"/>
</dbReference>
<dbReference type="STRING" id="511145.b2582"/>
<dbReference type="jPOST" id="P0AGG4"/>
<dbReference type="PaxDb" id="511145-b2582"/>
<dbReference type="EnsemblBacteria" id="AAC75635">
    <property type="protein sequence ID" value="AAC75635"/>
    <property type="gene ID" value="b2582"/>
</dbReference>
<dbReference type="GeneID" id="93774504"/>
<dbReference type="GeneID" id="947062"/>
<dbReference type="KEGG" id="ecj:JW2566"/>
<dbReference type="KEGG" id="eco:b2582"/>
<dbReference type="KEGG" id="ecoc:C3026_14310"/>
<dbReference type="PATRIC" id="fig|1411691.4.peg.4152"/>
<dbReference type="EchoBASE" id="EB1833"/>
<dbReference type="eggNOG" id="COG3118">
    <property type="taxonomic scope" value="Bacteria"/>
</dbReference>
<dbReference type="HOGENOM" id="CLU_090389_10_0_6"/>
<dbReference type="InParanoid" id="P0AGG4"/>
<dbReference type="OMA" id="QRVDMIN"/>
<dbReference type="OrthoDB" id="9790390at2"/>
<dbReference type="PhylomeDB" id="P0AGG4"/>
<dbReference type="BioCyc" id="EcoCyc:RED-THIOREDOXIN2-MONOMER"/>
<dbReference type="BioCyc" id="MetaCyc:RED-THIOREDOXIN2-MONOMER"/>
<dbReference type="PRO" id="PR:P0AGG4"/>
<dbReference type="Proteomes" id="UP000000625">
    <property type="component" value="Chromosome"/>
</dbReference>
<dbReference type="GO" id="GO:0005737">
    <property type="term" value="C:cytoplasm"/>
    <property type="evidence" value="ECO:0000315"/>
    <property type="project" value="EcoCyc"/>
</dbReference>
<dbReference type="GO" id="GO:0005829">
    <property type="term" value="C:cytosol"/>
    <property type="evidence" value="ECO:0000314"/>
    <property type="project" value="EcoCyc"/>
</dbReference>
<dbReference type="GO" id="GO:0047134">
    <property type="term" value="F:protein-disulfide reductase [NAD(P)H] activity"/>
    <property type="evidence" value="ECO:0000315"/>
    <property type="project" value="CACAO"/>
</dbReference>
<dbReference type="GO" id="GO:0015035">
    <property type="term" value="F:protein-disulfide reductase activity"/>
    <property type="evidence" value="ECO:0000315"/>
    <property type="project" value="EcoCyc"/>
</dbReference>
<dbReference type="GO" id="GO:0008270">
    <property type="term" value="F:zinc ion binding"/>
    <property type="evidence" value="ECO:0000314"/>
    <property type="project" value="EcoCyc"/>
</dbReference>
<dbReference type="CDD" id="cd02947">
    <property type="entry name" value="TRX_family"/>
    <property type="match status" value="1"/>
</dbReference>
<dbReference type="FunFam" id="2.30.30.380:FF:000002">
    <property type="entry name" value="Thioredoxin"/>
    <property type="match status" value="1"/>
</dbReference>
<dbReference type="FunFam" id="3.40.30.10:FF:000001">
    <property type="entry name" value="Thioredoxin"/>
    <property type="match status" value="1"/>
</dbReference>
<dbReference type="Gene3D" id="3.40.30.10">
    <property type="entry name" value="Glutaredoxin"/>
    <property type="match status" value="1"/>
</dbReference>
<dbReference type="Gene3D" id="2.30.30.380">
    <property type="entry name" value="Zn-finger domain of Sec23/24"/>
    <property type="match status" value="1"/>
</dbReference>
<dbReference type="InterPro" id="IPR049299">
    <property type="entry name" value="Thio2_N"/>
</dbReference>
<dbReference type="InterPro" id="IPR005746">
    <property type="entry name" value="Thioredoxin"/>
</dbReference>
<dbReference type="InterPro" id="IPR036249">
    <property type="entry name" value="Thioredoxin-like_sf"/>
</dbReference>
<dbReference type="InterPro" id="IPR017937">
    <property type="entry name" value="Thioredoxin_CS"/>
</dbReference>
<dbReference type="InterPro" id="IPR013766">
    <property type="entry name" value="Thioredoxin_domain"/>
</dbReference>
<dbReference type="NCBIfam" id="NF008229">
    <property type="entry name" value="PRK10996.1"/>
    <property type="match status" value="1"/>
</dbReference>
<dbReference type="NCBIfam" id="TIGR01068">
    <property type="entry name" value="thioredoxin"/>
    <property type="match status" value="1"/>
</dbReference>
<dbReference type="PANTHER" id="PTHR45663">
    <property type="entry name" value="GEO12009P1"/>
    <property type="match status" value="1"/>
</dbReference>
<dbReference type="PANTHER" id="PTHR45663:SF40">
    <property type="entry name" value="THIOREDOXIN 2"/>
    <property type="match status" value="1"/>
</dbReference>
<dbReference type="Pfam" id="PF00085">
    <property type="entry name" value="Thioredoxin"/>
    <property type="match status" value="1"/>
</dbReference>
<dbReference type="Pfam" id="PF21352">
    <property type="entry name" value="Zn_ribbon_Thio2"/>
    <property type="match status" value="1"/>
</dbReference>
<dbReference type="PRINTS" id="PR00421">
    <property type="entry name" value="THIOREDOXIN"/>
</dbReference>
<dbReference type="SUPFAM" id="SSF52833">
    <property type="entry name" value="Thioredoxin-like"/>
    <property type="match status" value="1"/>
</dbReference>
<dbReference type="PROSITE" id="PS00194">
    <property type="entry name" value="THIOREDOXIN_1"/>
    <property type="match status" value="1"/>
</dbReference>
<dbReference type="PROSITE" id="PS51352">
    <property type="entry name" value="THIOREDOXIN_2"/>
    <property type="match status" value="1"/>
</dbReference>
<gene>
    <name type="primary">trxC</name>
    <name type="synonym">yfiG</name>
    <name type="ordered locus">b2582</name>
    <name type="ordered locus">JW2566</name>
</gene>
<sequence length="139" mass="15555">MNTVCTHCQAINRIPDDRIEDAAKCGRCGHDLFDGEVINATGETLDKLLKDDLPVVIDFWAPWCGPCRNFAPIFEDVAQERSGKVRFVKVNTEAERELSSRFGIRSIPTIMIFKNGQVVDMLNGAVPKAPFDSWLNESL</sequence>
<comment type="function">
    <text>Efficient electron donor for the essential enzyme ribonucleotide reductase. Is also able to reduce the interchain disulfide bridges of insulin.</text>
</comment>
<comment type="catalytic activity">
    <reaction>
        <text>[protein]-dithiol + NAD(+) = [protein]-disulfide + NADH + H(+)</text>
        <dbReference type="Rhea" id="RHEA:18749"/>
        <dbReference type="Rhea" id="RHEA-COMP:10593"/>
        <dbReference type="Rhea" id="RHEA-COMP:10594"/>
        <dbReference type="ChEBI" id="CHEBI:15378"/>
        <dbReference type="ChEBI" id="CHEBI:29950"/>
        <dbReference type="ChEBI" id="CHEBI:50058"/>
        <dbReference type="ChEBI" id="CHEBI:57540"/>
        <dbReference type="ChEBI" id="CHEBI:57945"/>
        <dbReference type="EC" id="1.8.1.8"/>
    </reaction>
</comment>
<comment type="catalytic activity">
    <reaction>
        <text>[protein]-dithiol + NADP(+) = [protein]-disulfide + NADPH + H(+)</text>
        <dbReference type="Rhea" id="RHEA:18753"/>
        <dbReference type="Rhea" id="RHEA-COMP:10593"/>
        <dbReference type="Rhea" id="RHEA-COMP:10594"/>
        <dbReference type="ChEBI" id="CHEBI:15378"/>
        <dbReference type="ChEBI" id="CHEBI:29950"/>
        <dbReference type="ChEBI" id="CHEBI:50058"/>
        <dbReference type="ChEBI" id="CHEBI:57783"/>
        <dbReference type="ChEBI" id="CHEBI:58349"/>
        <dbReference type="EC" id="1.8.1.8"/>
    </reaction>
</comment>
<comment type="interaction">
    <interactant intactId="EBI-549392">
        <id>P0AGG4</id>
    </interactant>
    <interactant intactId="EBI-554780">
        <id>P14900</id>
        <label>murD</label>
    </interactant>
    <organismsDiffer>false</organismsDiffer>
    <experiments>2</experiments>
</comment>
<comment type="subcellular location">
    <subcellularLocation>
        <location>Cytoplasm</location>
    </subcellularLocation>
</comment>
<comment type="similarity">
    <text evidence="3">Belongs to the thioredoxin family.</text>
</comment>
<organism>
    <name type="scientific">Escherichia coli (strain K12)</name>
    <dbReference type="NCBI Taxonomy" id="83333"/>
    <lineage>
        <taxon>Bacteria</taxon>
        <taxon>Pseudomonadati</taxon>
        <taxon>Pseudomonadota</taxon>
        <taxon>Gammaproteobacteria</taxon>
        <taxon>Enterobacterales</taxon>
        <taxon>Enterobacteriaceae</taxon>
        <taxon>Escherichia</taxon>
    </lineage>
</organism>
<keyword id="KW-0963">Cytoplasm</keyword>
<keyword id="KW-1015">Disulfide bond</keyword>
<keyword id="KW-0249">Electron transport</keyword>
<keyword id="KW-0479">Metal-binding</keyword>
<keyword id="KW-0520">NAD</keyword>
<keyword id="KW-0560">Oxidoreductase</keyword>
<keyword id="KW-0676">Redox-active center</keyword>
<keyword id="KW-1185">Reference proteome</keyword>
<keyword id="KW-0813">Transport</keyword>
<keyword id="KW-0862">Zinc</keyword>
<keyword id="KW-0863">Zinc-finger</keyword>
<feature type="chain" id="PRO_0000120102" description="Thioredoxin 2">
    <location>
        <begin position="1"/>
        <end position="139"/>
    </location>
</feature>
<feature type="domain" description="Thioredoxin" evidence="2">
    <location>
        <begin position="26"/>
        <end position="139"/>
    </location>
</feature>
<feature type="zinc finger region" evidence="1">
    <location>
        <begin position="5"/>
        <end position="18"/>
    </location>
</feature>
<feature type="disulfide bond" description="Redox-active" evidence="2">
    <location>
        <begin position="64"/>
        <end position="67"/>
    </location>
</feature>
<accession>P0AGG4</accession>
<accession>P33636</accession>
<accession>P76593</accession>
<accession>P77000</accession>
<accession>P77001</accession>
<evidence type="ECO:0000255" key="1"/>
<evidence type="ECO:0000255" key="2">
    <source>
        <dbReference type="PROSITE-ProRule" id="PRU00691"/>
    </source>
</evidence>
<evidence type="ECO:0000305" key="3"/>
<reference key="1">
    <citation type="journal article" date="1997" name="J. Biol. Chem.">
        <title>Cloning, expression, and characterization of a novel Escherichia coli thioredoxin.</title>
        <authorList>
            <person name="Miranda-Vizuete A."/>
            <person name="Damdimopoulos A.E."/>
            <person name="Gustafsson J.-A."/>
            <person name="Spyrou G."/>
        </authorList>
    </citation>
    <scope>NUCLEOTIDE SEQUENCE [GENOMIC DNA]</scope>
    <scope>CHARACTERIZATION</scope>
    <source>
        <strain>K12 / TG1</strain>
    </source>
</reference>
<reference key="2">
    <citation type="journal article" date="1997" name="DNA Res.">
        <title>Construction of a contiguous 874-kb sequence of the Escherichia coli-K12 genome corresponding to 50.0-68.8 min on the linkage map and analysis of its sequence features.</title>
        <authorList>
            <person name="Yamamoto Y."/>
            <person name="Aiba H."/>
            <person name="Baba T."/>
            <person name="Hayashi K."/>
            <person name="Inada T."/>
            <person name="Isono K."/>
            <person name="Itoh T."/>
            <person name="Kimura S."/>
            <person name="Kitagawa M."/>
            <person name="Makino K."/>
            <person name="Miki T."/>
            <person name="Mitsuhashi N."/>
            <person name="Mizobuchi K."/>
            <person name="Mori H."/>
            <person name="Nakade S."/>
            <person name="Nakamura Y."/>
            <person name="Nashimoto H."/>
            <person name="Oshima T."/>
            <person name="Oyama S."/>
            <person name="Saito N."/>
            <person name="Sampei G."/>
            <person name="Satoh Y."/>
            <person name="Sivasundaram S."/>
            <person name="Tagami H."/>
            <person name="Takahashi H."/>
            <person name="Takeda J."/>
            <person name="Takemoto K."/>
            <person name="Uehara K."/>
            <person name="Wada C."/>
            <person name="Yamagata S."/>
            <person name="Horiuchi T."/>
        </authorList>
    </citation>
    <scope>NUCLEOTIDE SEQUENCE [LARGE SCALE GENOMIC DNA]</scope>
    <source>
        <strain>K12 / W3110 / ATCC 27325 / DSM 5911</strain>
    </source>
</reference>
<reference key="3">
    <citation type="journal article" date="1997" name="Science">
        <title>The complete genome sequence of Escherichia coli K-12.</title>
        <authorList>
            <person name="Blattner F.R."/>
            <person name="Plunkett G. III"/>
            <person name="Bloch C.A."/>
            <person name="Perna N.T."/>
            <person name="Burland V."/>
            <person name="Riley M."/>
            <person name="Collado-Vides J."/>
            <person name="Glasner J.D."/>
            <person name="Rode C.K."/>
            <person name="Mayhew G.F."/>
            <person name="Gregor J."/>
            <person name="Davis N.W."/>
            <person name="Kirkpatrick H.A."/>
            <person name="Goeden M.A."/>
            <person name="Rose D.J."/>
            <person name="Mau B."/>
            <person name="Shao Y."/>
        </authorList>
    </citation>
    <scope>NUCLEOTIDE SEQUENCE [LARGE SCALE GENOMIC DNA]</scope>
    <source>
        <strain>K12 / MG1655 / ATCC 47076</strain>
    </source>
</reference>
<reference key="4">
    <citation type="journal article" date="2006" name="Mol. Syst. Biol.">
        <title>Highly accurate genome sequences of Escherichia coli K-12 strains MG1655 and W3110.</title>
        <authorList>
            <person name="Hayashi K."/>
            <person name="Morooka N."/>
            <person name="Yamamoto Y."/>
            <person name="Fujita K."/>
            <person name="Isono K."/>
            <person name="Choi S."/>
            <person name="Ohtsubo E."/>
            <person name="Baba T."/>
            <person name="Wanner B.L."/>
            <person name="Mori H."/>
            <person name="Horiuchi T."/>
        </authorList>
    </citation>
    <scope>NUCLEOTIDE SEQUENCE [LARGE SCALE GENOMIC DNA]</scope>
    <scope>SEQUENCE REVISION</scope>
    <source>
        <strain>K12 / W3110 / ATCC 27325 / DSM 5911</strain>
    </source>
</reference>
<reference key="5">
    <citation type="book" date="1993" name="The translational apparatus">
        <title>Non-ribosomal proteins affecting the assembly of ribosomes in Escherichia coli.</title>
        <editorList>
            <person name="Nierhaus K.H."/>
        </editorList>
        <authorList>
            <person name="Nashimoto H."/>
        </authorList>
    </citation>
    <scope>NUCLEOTIDE SEQUENCE [GENOMIC DNA] OF 37-104</scope>
    <source>
        <strain>K12</strain>
    </source>
</reference>
<reference key="6">
    <citation type="unpublished observations" date="1993-11">
        <authorList>
            <person name="Rudd K.E."/>
        </authorList>
    </citation>
    <scope>IDENTIFICATION</scope>
</reference>
<proteinExistence type="evidence at protein level"/>